<accession>W5DYE3</accession>
<accession>Q0PCF3</accession>
<dbReference type="EC" id="1.1.1.285" evidence="4"/>
<dbReference type="EMBL" id="AB269908">
    <property type="protein sequence ID" value="BAF03163.1"/>
    <property type="molecule type" value="mRNA"/>
</dbReference>
<dbReference type="EMBL" id="KX348551">
    <property type="protein sequence ID" value="ARQ30105.1"/>
    <property type="molecule type" value="Genomic_DNA"/>
</dbReference>
<dbReference type="SMR" id="W5DYE3"/>
<dbReference type="STRING" id="4565.W5DYE3"/>
<dbReference type="PaxDb" id="4565-Traes_4AS_887399584.1"/>
<dbReference type="EnsemblPlants" id="TraesARI4A03G02064620.1">
    <property type="protein sequence ID" value="TraesARI4A03G02064620.1"/>
    <property type="gene ID" value="TraesARI4A03G02064620"/>
</dbReference>
<dbReference type="EnsemblPlants" id="TraesCAD_scaffold_127405_01G000200.1">
    <property type="protein sequence ID" value="TraesCAD_scaffold_127405_01G000200.1"/>
    <property type="gene ID" value="TraesCAD_scaffold_127405_01G000200"/>
</dbReference>
<dbReference type="EnsemblPlants" id="TraesCLE_scaffold_069270_01G000100.1">
    <property type="protein sequence ID" value="TraesCLE_scaffold_069270_01G000100.1"/>
    <property type="gene ID" value="TraesCLE_scaffold_069270_01G000100"/>
</dbReference>
<dbReference type="EnsemblPlants" id="TraesCS4A02G074800.1">
    <property type="protein sequence ID" value="TraesCS4A02G074800.1"/>
    <property type="gene ID" value="TraesCS4A02G074800"/>
</dbReference>
<dbReference type="EnsemblPlants" id="TraesCS4A03G0151600.1">
    <property type="protein sequence ID" value="TraesCS4A03G0151600.1.CDS"/>
    <property type="gene ID" value="TraesCS4A03G0151600"/>
</dbReference>
<dbReference type="EnsemblPlants" id="TraesJAG4A03G02035810.1">
    <property type="protein sequence ID" value="TraesJAG4A03G02035810.1"/>
    <property type="gene ID" value="TraesJAG4A03G02035810"/>
</dbReference>
<dbReference type="EnsemblPlants" id="TraesJUL4A03G02047870.1">
    <property type="protein sequence ID" value="TraesJUL4A03G02047870.1"/>
    <property type="gene ID" value="TraesJUL4A03G02047870"/>
</dbReference>
<dbReference type="EnsemblPlants" id="TraesKAR4A01G0045330.1">
    <property type="protein sequence ID" value="cds.TraesKAR4A01G0045330.1"/>
    <property type="gene ID" value="TraesKAR4A01G0045330"/>
</dbReference>
<dbReference type="EnsemblPlants" id="TraesLAC4A03G01982170.1">
    <property type="protein sequence ID" value="TraesLAC4A03G01982170.1"/>
    <property type="gene ID" value="TraesLAC4A03G01982170"/>
</dbReference>
<dbReference type="EnsemblPlants" id="TraesLDM4A03G02027790.1">
    <property type="protein sequence ID" value="TraesLDM4A03G02027790.1"/>
    <property type="gene ID" value="TraesLDM4A03G02027790"/>
</dbReference>
<dbReference type="EnsemblPlants" id="TraesMAC4A03G02028190.1">
    <property type="protein sequence ID" value="TraesMAC4A03G02028190.1"/>
    <property type="gene ID" value="TraesMAC4A03G02028190"/>
</dbReference>
<dbReference type="EnsemblPlants" id="TraesNOR4A03G02055350.1">
    <property type="protein sequence ID" value="TraesNOR4A03G02055350.1"/>
    <property type="gene ID" value="TraesNOR4A03G02055350"/>
</dbReference>
<dbReference type="EnsemblPlants" id="TraesPARA_EIv1.0_1292550.1">
    <property type="protein sequence ID" value="TraesPARA_EIv1.0_1292550.1.CDS"/>
    <property type="gene ID" value="TraesPARA_EIv1.0_1292550"/>
</dbReference>
<dbReference type="EnsemblPlants" id="TraesRN4A0100148100.1">
    <property type="protein sequence ID" value="TraesRN4A0100148100.1"/>
    <property type="gene ID" value="TraesRN4A0100148100"/>
</dbReference>
<dbReference type="EnsemblPlants" id="TraesROB_scaffold_084192_01G000100.1">
    <property type="protein sequence ID" value="TraesROB_scaffold_084192_01G000100.1"/>
    <property type="gene ID" value="TraesROB_scaffold_084192_01G000100"/>
</dbReference>
<dbReference type="EnsemblPlants" id="TraesSTA4A03G02025030.1">
    <property type="protein sequence ID" value="TraesSTA4A03G02025030.1"/>
    <property type="gene ID" value="TraesSTA4A03G02025030"/>
</dbReference>
<dbReference type="EnsemblPlants" id="TraesSYM4A03G02054660.1">
    <property type="protein sequence ID" value="TraesSYM4A03G02054660.1"/>
    <property type="gene ID" value="TraesSYM4A03G02054660"/>
</dbReference>
<dbReference type="EnsemblPlants" id="TraesWEE_scaffold_081049_01G000100.1">
    <property type="protein sequence ID" value="TraesWEE_scaffold_081049_01G000100.1"/>
    <property type="gene ID" value="TraesWEE_scaffold_081049_01G000100"/>
</dbReference>
<dbReference type="Gramene" id="TraesARI4A03G02064620.1">
    <property type="protein sequence ID" value="TraesARI4A03G02064620.1"/>
    <property type="gene ID" value="TraesARI4A03G02064620"/>
</dbReference>
<dbReference type="Gramene" id="TraesCAD_scaffold_127405_01G000200.1">
    <property type="protein sequence ID" value="TraesCAD_scaffold_127405_01G000200.1"/>
    <property type="gene ID" value="TraesCAD_scaffold_127405_01G000200"/>
</dbReference>
<dbReference type="Gramene" id="TraesCLE_scaffold_069270_01G000100.1">
    <property type="protein sequence ID" value="TraesCLE_scaffold_069270_01G000100.1"/>
    <property type="gene ID" value="TraesCLE_scaffold_069270_01G000100"/>
</dbReference>
<dbReference type="Gramene" id="TraesCS4A02G074800.1">
    <property type="protein sequence ID" value="TraesCS4A02G074800.1"/>
    <property type="gene ID" value="TraesCS4A02G074800"/>
</dbReference>
<dbReference type="Gramene" id="TraesCS4A03G0151600.1">
    <property type="protein sequence ID" value="TraesCS4A03G0151600.1.CDS"/>
    <property type="gene ID" value="TraesCS4A03G0151600"/>
</dbReference>
<dbReference type="Gramene" id="TraesJAG4A03G02035810.1">
    <property type="protein sequence ID" value="TraesJAG4A03G02035810.1"/>
    <property type="gene ID" value="TraesJAG4A03G02035810"/>
</dbReference>
<dbReference type="Gramene" id="TraesJUL4A03G02047870.1">
    <property type="protein sequence ID" value="TraesJUL4A03G02047870.1"/>
    <property type="gene ID" value="TraesJUL4A03G02047870"/>
</dbReference>
<dbReference type="Gramene" id="TraesKAR4A01G0045330.1">
    <property type="protein sequence ID" value="cds.TraesKAR4A01G0045330.1"/>
    <property type="gene ID" value="TraesKAR4A01G0045330"/>
</dbReference>
<dbReference type="Gramene" id="TraesLAC4A03G01982170.1">
    <property type="protein sequence ID" value="TraesLAC4A03G01982170.1"/>
    <property type="gene ID" value="TraesLAC4A03G01982170"/>
</dbReference>
<dbReference type="Gramene" id="TraesLDM4A03G02027790.1">
    <property type="protein sequence ID" value="TraesLDM4A03G02027790.1"/>
    <property type="gene ID" value="TraesLDM4A03G02027790"/>
</dbReference>
<dbReference type="Gramene" id="TraesMAC4A03G02028190.1">
    <property type="protein sequence ID" value="TraesMAC4A03G02028190.1"/>
    <property type="gene ID" value="TraesMAC4A03G02028190"/>
</dbReference>
<dbReference type="Gramene" id="TraesNOR4A03G02055350.1">
    <property type="protein sequence ID" value="TraesNOR4A03G02055350.1"/>
    <property type="gene ID" value="TraesNOR4A03G02055350"/>
</dbReference>
<dbReference type="Gramene" id="TraesPARA_EIv1.0_1292550.1">
    <property type="protein sequence ID" value="TraesPARA_EIv1.0_1292550.1.CDS"/>
    <property type="gene ID" value="TraesPARA_EIv1.0_1292550"/>
</dbReference>
<dbReference type="Gramene" id="TraesRN4A0100148100.1">
    <property type="protein sequence ID" value="TraesRN4A0100148100.1"/>
    <property type="gene ID" value="TraesRN4A0100148100"/>
</dbReference>
<dbReference type="Gramene" id="TraesROB_scaffold_084192_01G000100.1">
    <property type="protein sequence ID" value="TraesROB_scaffold_084192_01G000100.1"/>
    <property type="gene ID" value="TraesROB_scaffold_084192_01G000100"/>
</dbReference>
<dbReference type="Gramene" id="TraesSTA4A03G02025030.1">
    <property type="protein sequence ID" value="TraesSTA4A03G02025030.1"/>
    <property type="gene ID" value="TraesSTA4A03G02025030"/>
</dbReference>
<dbReference type="Gramene" id="TraesSYM4A03G02054660.1">
    <property type="protein sequence ID" value="TraesSYM4A03G02054660.1"/>
    <property type="gene ID" value="TraesSYM4A03G02054660"/>
</dbReference>
<dbReference type="Gramene" id="TraesWEE_scaffold_081049_01G000100.1">
    <property type="protein sequence ID" value="TraesWEE_scaffold_081049_01G000100.1"/>
    <property type="gene ID" value="TraesWEE_scaffold_081049_01G000100"/>
</dbReference>
<dbReference type="eggNOG" id="KOG1577">
    <property type="taxonomic scope" value="Eukaryota"/>
</dbReference>
<dbReference type="HOGENOM" id="CLU_023205_0_0_1"/>
<dbReference type="OMA" id="WNNYHAK"/>
<dbReference type="OrthoDB" id="416253at2759"/>
<dbReference type="Proteomes" id="UP000019116">
    <property type="component" value="Chromosome 4A"/>
</dbReference>
<dbReference type="ExpressionAtlas" id="W5DYE3">
    <property type="expression patterns" value="baseline and differential"/>
</dbReference>
<dbReference type="GO" id="GO:0005829">
    <property type="term" value="C:cytosol"/>
    <property type="evidence" value="ECO:0000318"/>
    <property type="project" value="GO_Central"/>
</dbReference>
<dbReference type="GO" id="GO:0033707">
    <property type="term" value="F:3''-deamino-3''-oxonicotianamine reductase activity"/>
    <property type="evidence" value="ECO:0000314"/>
    <property type="project" value="UniProtKB"/>
</dbReference>
<dbReference type="GO" id="GO:0004032">
    <property type="term" value="F:aldose reductase (NADPH) activity"/>
    <property type="evidence" value="ECO:0000318"/>
    <property type="project" value="GO_Central"/>
</dbReference>
<dbReference type="GO" id="GO:1990641">
    <property type="term" value="P:response to iron ion starvation"/>
    <property type="evidence" value="ECO:0000270"/>
    <property type="project" value="UniProtKB"/>
</dbReference>
<dbReference type="GO" id="GO:0019290">
    <property type="term" value="P:siderophore biosynthetic process"/>
    <property type="evidence" value="ECO:0000314"/>
    <property type="project" value="UniProtKB"/>
</dbReference>
<dbReference type="CDD" id="cd19124">
    <property type="entry name" value="AKR_AKR4A_4B"/>
    <property type="match status" value="1"/>
</dbReference>
<dbReference type="FunFam" id="3.20.20.100:FF:000014">
    <property type="entry name" value="NAD(P)-linked oxidoreductase superfamily protein"/>
    <property type="match status" value="1"/>
</dbReference>
<dbReference type="Gene3D" id="3.20.20.100">
    <property type="entry name" value="NADP-dependent oxidoreductase domain"/>
    <property type="match status" value="1"/>
</dbReference>
<dbReference type="InterPro" id="IPR020471">
    <property type="entry name" value="AKR"/>
</dbReference>
<dbReference type="InterPro" id="IPR044497">
    <property type="entry name" value="AKR4A/B"/>
</dbReference>
<dbReference type="InterPro" id="IPR018170">
    <property type="entry name" value="Aldo/ket_reductase_CS"/>
</dbReference>
<dbReference type="InterPro" id="IPR023210">
    <property type="entry name" value="NADP_OxRdtase_dom"/>
</dbReference>
<dbReference type="InterPro" id="IPR036812">
    <property type="entry name" value="NADP_OxRdtase_dom_sf"/>
</dbReference>
<dbReference type="PANTHER" id="PTHR11732">
    <property type="entry name" value="ALDO/KETO REDUCTASE"/>
    <property type="match status" value="1"/>
</dbReference>
<dbReference type="Pfam" id="PF00248">
    <property type="entry name" value="Aldo_ket_red"/>
    <property type="match status" value="1"/>
</dbReference>
<dbReference type="PIRSF" id="PIRSF000097">
    <property type="entry name" value="AKR"/>
    <property type="match status" value="1"/>
</dbReference>
<dbReference type="PRINTS" id="PR00069">
    <property type="entry name" value="ALDKETRDTASE"/>
</dbReference>
<dbReference type="SUPFAM" id="SSF51430">
    <property type="entry name" value="NAD(P)-linked oxidoreductase"/>
    <property type="match status" value="1"/>
</dbReference>
<dbReference type="PROSITE" id="PS00798">
    <property type="entry name" value="ALDOKETO_REDUCTASE_1"/>
    <property type="match status" value="1"/>
</dbReference>
<dbReference type="PROSITE" id="PS00063">
    <property type="entry name" value="ALDOKETO_REDUCTASE_3"/>
    <property type="match status" value="1"/>
</dbReference>
<gene>
    <name evidence="7" type="primary">DMAS1-A</name>
    <name evidence="6" type="synonym">DMAS1</name>
</gene>
<feature type="chain" id="PRO_0000442302" description="Deoxymugineic acid synthase 1-A">
    <location>
        <begin position="1"/>
        <end position="314"/>
    </location>
</feature>
<feature type="region of interest" description="Disordered" evidence="3">
    <location>
        <begin position="1"/>
        <end position="21"/>
    </location>
</feature>
<feature type="active site" description="Proton donor" evidence="2">
    <location>
        <position position="49"/>
    </location>
</feature>
<feature type="binding site" evidence="1">
    <location>
        <position position="44"/>
    </location>
    <ligand>
        <name>NADP(+)</name>
        <dbReference type="ChEBI" id="CHEBI:58349"/>
    </ligand>
</feature>
<feature type="binding site" evidence="2">
    <location>
        <position position="112"/>
    </location>
    <ligand>
        <name>substrate</name>
    </ligand>
</feature>
<feature type="binding site" evidence="1">
    <location>
        <begin position="158"/>
        <end position="159"/>
    </location>
    <ligand>
        <name>NADP(+)</name>
        <dbReference type="ChEBI" id="CHEBI:58349"/>
    </ligand>
</feature>
<feature type="binding site" evidence="1">
    <location>
        <position position="180"/>
    </location>
    <ligand>
        <name>NADP(+)</name>
        <dbReference type="ChEBI" id="CHEBI:58349"/>
    </ligand>
</feature>
<feature type="binding site" evidence="1">
    <location>
        <begin position="258"/>
        <end position="266"/>
    </location>
    <ligand>
        <name>NADP(+)</name>
        <dbReference type="ChEBI" id="CHEBI:58349"/>
    </ligand>
</feature>
<feature type="binding site" evidence="2">
    <location>
        <begin position="273"/>
        <end position="281"/>
    </location>
    <ligand>
        <name>NADP(+)</name>
        <dbReference type="ChEBI" id="CHEBI:58349"/>
    </ligand>
</feature>
<feature type="sequence conflict" description="In Ref. 1; BAF03163." evidence="8" ref="1">
    <original>K</original>
    <variation>R</variation>
    <location>
        <position position="6"/>
    </location>
</feature>
<feature type="sequence conflict" description="In Ref. 1; BAF03163." evidence="8" ref="1">
    <original>E</original>
    <variation>D</variation>
    <location>
        <position position="129"/>
    </location>
</feature>
<feature type="sequence conflict" description="In Ref. 1; BAF03163." evidence="8" ref="1">
    <original>E</original>
    <variation>D</variation>
    <location>
        <position position="166"/>
    </location>
</feature>
<feature type="sequence conflict" description="In Ref. 1; BAF03163." evidence="8" ref="1">
    <original>W</original>
    <variation>R</variation>
    <location>
        <position position="216"/>
    </location>
</feature>
<feature type="sequence conflict" description="In Ref. 1; BAF03163." evidence="8" ref="1">
    <original>H</original>
    <variation>R</variation>
    <location>
        <position position="279"/>
    </location>
</feature>
<keyword id="KW-0408">Iron</keyword>
<keyword id="KW-0521">NADP</keyword>
<keyword id="KW-0560">Oxidoreductase</keyword>
<keyword id="KW-1185">Reference proteome</keyword>
<evidence type="ECO:0000250" key="1">
    <source>
        <dbReference type="UniProtKB" id="O43488"/>
    </source>
</evidence>
<evidence type="ECO:0000250" key="2">
    <source>
        <dbReference type="UniProtKB" id="Q8CG76"/>
    </source>
</evidence>
<evidence type="ECO:0000256" key="3">
    <source>
        <dbReference type="SAM" id="MobiDB-lite"/>
    </source>
</evidence>
<evidence type="ECO:0000269" key="4">
    <source>
    </source>
</evidence>
<evidence type="ECO:0000269" key="5">
    <source>
    </source>
</evidence>
<evidence type="ECO:0000303" key="6">
    <source>
    </source>
</evidence>
<evidence type="ECO:0000303" key="7">
    <source>
    </source>
</evidence>
<evidence type="ECO:0000305" key="8"/>
<name>DMS1A_WHEAT</name>
<sequence length="314" mass="35198">MGAGDKTAAGMPRIGMGTAVQGPKPDPIRRAVLRAIEVGYRHFDTAAHYETEAPIGEAAAEAVRSGAVASRDDLFITSKLWCSDAHRDRVVPALRQTLRNLQMEYVDLYLVHWPVSMKPGRFKAPFTAEDFVPFDMRAVWEAMEECHRLGLAKAIGVANFSCKKLETLLSFATIPPTVNQVEVNPVWQQRKLREFCRGKGIQLCAYSPLGAKGTHWGSDAVMDAGVLQEIAASRGKSVAQVCLRWVYEQGDCLIVKSFDEARMRENLDVDGWELTEEEHRRIAEIPQRKINLGKRYVSEHGPYKSLEELWDGEI</sequence>
<comment type="function">
    <text evidence="4">Catalyzes the reduction of a 3''-keto intermediate during the biosynthesis of 2'-deoxymugineic acid (DMA) from L-Met. Involved in the formation of phytosiderophores (MAs) belonging to the mugineic acid family and required to acquire iron.</text>
</comment>
<comment type="catalytic activity">
    <reaction evidence="4">
        <text>2'-deoxymugineate + NAD(+) = 3''-deamino-3''-oxonicotianamine + NADH + H(+)</text>
        <dbReference type="Rhea" id="RHEA:16141"/>
        <dbReference type="ChEBI" id="CHEBI:15378"/>
        <dbReference type="ChEBI" id="CHEBI:57540"/>
        <dbReference type="ChEBI" id="CHEBI:57945"/>
        <dbReference type="ChEBI" id="CHEBI:58487"/>
        <dbReference type="ChEBI" id="CHEBI:58685"/>
        <dbReference type="EC" id="1.1.1.285"/>
    </reaction>
</comment>
<comment type="catalytic activity">
    <reaction evidence="4">
        <text>2'-deoxymugineate + NADP(+) = 3''-deamino-3''-oxonicotianamine + NADPH + H(+)</text>
        <dbReference type="Rhea" id="RHEA:16137"/>
        <dbReference type="ChEBI" id="CHEBI:15378"/>
        <dbReference type="ChEBI" id="CHEBI:57783"/>
        <dbReference type="ChEBI" id="CHEBI:58349"/>
        <dbReference type="ChEBI" id="CHEBI:58487"/>
        <dbReference type="ChEBI" id="CHEBI:58685"/>
        <dbReference type="EC" id="1.1.1.285"/>
    </reaction>
</comment>
<comment type="biophysicochemical properties">
    <phDependence>
        <text evidence="4">Optimum pH is 8-9.</text>
    </phDependence>
</comment>
<comment type="pathway">
    <text evidence="4">Siderophore biosynthesis.</text>
</comment>
<comment type="tissue specificity">
    <text evidence="5">Mostly expressed in root tissues, observed in mesocotyl and embryonic roots, seedling roots, crown and seedling leafes, mature bracts, anthers, pistil, caryopsis and embryos.</text>
</comment>
<comment type="induction">
    <text evidence="4 5">Up-regulated under iron-deficient conditions in root and shoot tissues.</text>
</comment>
<comment type="similarity">
    <text evidence="8">Belongs to the aldo/keto reductase family.</text>
</comment>
<proteinExistence type="evidence at protein level"/>
<reference key="1">
    <citation type="journal article" date="2006" name="J. Biol. Chem.">
        <title>Cloning and characterization of deoxymugineic acid synthase genes from graminaceous plants.</title>
        <authorList>
            <person name="Bashir K."/>
            <person name="Inoue H."/>
            <person name="Nagasaka S."/>
            <person name="Takahashi M."/>
            <person name="Nakanishi H."/>
            <person name="Mori S."/>
            <person name="Nishizawa N.K."/>
        </authorList>
    </citation>
    <scope>NUCLEOTIDE SEQUENCE [MRNA]</scope>
    <scope>FUNCTION</scope>
    <scope>PATHWAY</scope>
    <scope>CATALYTIC ACTIVITY</scope>
    <scope>BIOPHYSICOCHEMICAL PROPERTIES</scope>
    <scope>INDUCTION BY IRON-DEFICIENCY</scope>
    <source>
        <strain>cv. Chinese Spring</strain>
    </source>
</reference>
<reference key="2">
    <citation type="journal article" date="2017" name="PLoS ONE">
        <title>Characterisation of the nicotianamine aminotransferase and deoxymugineic acid synthase genes essential to Strategy II iron uptake in bread wheat (Triticum aestivum L.).</title>
        <authorList>
            <person name="Beasley J.T."/>
            <person name="Bonneau J.P."/>
            <person name="Johnson A.A.T."/>
        </authorList>
    </citation>
    <scope>NUCLEOTIDE SEQUENCE [GENOMIC DNA]</scope>
    <scope>TISSUE SPECIFICITY</scope>
    <scope>INDUCTION BY IRON-DEFICIENCY</scope>
    <source>
        <strain>cv. Gladius</strain>
    </source>
</reference>
<reference key="3">
    <citation type="journal article" date="2012" name="Nature">
        <title>Analysis of the bread wheat genome using whole-genome shotgun sequencing.</title>
        <authorList>
            <person name="Brenchley R."/>
            <person name="Spannagl M."/>
            <person name="Pfeifer M."/>
            <person name="Barker G.L."/>
            <person name="D'Amore R."/>
            <person name="Allen A.M."/>
            <person name="McKenzie N."/>
            <person name="Kramer M."/>
            <person name="Kerhornou A."/>
            <person name="Bolser D."/>
            <person name="Kay S."/>
            <person name="Waite D."/>
            <person name="Trick M."/>
            <person name="Bancroft I."/>
            <person name="Gu Y."/>
            <person name="Huo N."/>
            <person name="Luo M.C."/>
            <person name="Sehgal S."/>
            <person name="Gill B."/>
            <person name="Kianian S."/>
            <person name="Anderson O."/>
            <person name="Kersey P."/>
            <person name="Dvorak J."/>
            <person name="McCombie W.R."/>
            <person name="Hall A."/>
            <person name="Mayer K.F."/>
            <person name="Edwards K.J."/>
            <person name="Bevan M.W."/>
            <person name="Hall N."/>
        </authorList>
    </citation>
    <scope>NUCLEOTIDE SEQUENCE [LARGE SCALE GENOMIC DNA]</scope>
    <source>
        <strain>cv. Chinese Spring</strain>
    </source>
</reference>
<protein>
    <recommendedName>
        <fullName evidence="6 7">Deoxymugineic acid synthase 1-A</fullName>
        <shortName evidence="6">TaDMAS1</shortName>
        <ecNumber evidence="4">1.1.1.285</ecNumber>
    </recommendedName>
</protein>
<organism>
    <name type="scientific">Triticum aestivum</name>
    <name type="common">Wheat</name>
    <dbReference type="NCBI Taxonomy" id="4565"/>
    <lineage>
        <taxon>Eukaryota</taxon>
        <taxon>Viridiplantae</taxon>
        <taxon>Streptophyta</taxon>
        <taxon>Embryophyta</taxon>
        <taxon>Tracheophyta</taxon>
        <taxon>Spermatophyta</taxon>
        <taxon>Magnoliopsida</taxon>
        <taxon>Liliopsida</taxon>
        <taxon>Poales</taxon>
        <taxon>Poaceae</taxon>
        <taxon>BOP clade</taxon>
        <taxon>Pooideae</taxon>
        <taxon>Triticodae</taxon>
        <taxon>Triticeae</taxon>
        <taxon>Triticinae</taxon>
        <taxon>Triticum</taxon>
    </lineage>
</organism>